<keyword id="KW-0449">Lipoprotein</keyword>
<keyword id="KW-0519">Myristate</keyword>
<keyword id="KW-0597">Phosphoprotein</keyword>
<keyword id="KW-1185">Reference proteome</keyword>
<dbReference type="EMBL" id="BC105212">
    <property type="protein sequence ID" value="AAI05213.1"/>
    <property type="molecule type" value="mRNA"/>
</dbReference>
<dbReference type="EMBL" id="AY568574">
    <property type="protein sequence ID" value="AAS77580.1"/>
    <property type="molecule type" value="mRNA"/>
</dbReference>
<dbReference type="RefSeq" id="NP_001029581.1">
    <property type="nucleotide sequence ID" value="NM_001034409.2"/>
</dbReference>
<dbReference type="RefSeq" id="XP_010802558.1">
    <property type="nucleotide sequence ID" value="XM_010804256.4"/>
</dbReference>
<dbReference type="RefSeq" id="XP_015324872.1">
    <property type="nucleotide sequence ID" value="XM_015469386.3"/>
</dbReference>
<dbReference type="RefSeq" id="XP_024846387.1">
    <property type="nucleotide sequence ID" value="XM_024990619.2"/>
</dbReference>
<dbReference type="SMR" id="Q3MHJ7"/>
<dbReference type="FunCoup" id="Q3MHJ7">
    <property type="interactions" value="82"/>
</dbReference>
<dbReference type="STRING" id="9913.ENSBTAP00000033621"/>
<dbReference type="PaxDb" id="9913-ENSBTAP00000033621"/>
<dbReference type="Ensembl" id="ENSBTAT00000033712.5">
    <property type="protein sequence ID" value="ENSBTAP00000033621.3"/>
    <property type="gene ID" value="ENSBTAG00000019065.6"/>
</dbReference>
<dbReference type="GeneID" id="511767"/>
<dbReference type="KEGG" id="bta:511767"/>
<dbReference type="CTD" id="80820"/>
<dbReference type="VEuPathDB" id="HostDB:ENSBTAG00000019065"/>
<dbReference type="VGNC" id="VGNC:28338">
    <property type="gene designation" value="EEPD1"/>
</dbReference>
<dbReference type="eggNOG" id="KOG1857">
    <property type="taxonomic scope" value="Eukaryota"/>
</dbReference>
<dbReference type="GeneTree" id="ENSGT00390000009677"/>
<dbReference type="HOGENOM" id="CLU_033721_1_0_1"/>
<dbReference type="InParanoid" id="Q3MHJ7"/>
<dbReference type="OMA" id="HLVPANT"/>
<dbReference type="OrthoDB" id="6237065at2759"/>
<dbReference type="TreeFam" id="TF328735"/>
<dbReference type="Proteomes" id="UP000009136">
    <property type="component" value="Chromosome 4"/>
</dbReference>
<dbReference type="Bgee" id="ENSBTAG00000019065">
    <property type="expression patterns" value="Expressed in bone marrow and 105 other cell types or tissues"/>
</dbReference>
<dbReference type="GO" id="GO:0005886">
    <property type="term" value="C:plasma membrane"/>
    <property type="evidence" value="ECO:0000318"/>
    <property type="project" value="GO_Central"/>
</dbReference>
<dbReference type="GO" id="GO:0003824">
    <property type="term" value="F:catalytic activity"/>
    <property type="evidence" value="ECO:0007669"/>
    <property type="project" value="InterPro"/>
</dbReference>
<dbReference type="GO" id="GO:0003677">
    <property type="term" value="F:DNA binding"/>
    <property type="evidence" value="ECO:0007669"/>
    <property type="project" value="InterPro"/>
</dbReference>
<dbReference type="GO" id="GO:0006281">
    <property type="term" value="P:DNA repair"/>
    <property type="evidence" value="ECO:0007669"/>
    <property type="project" value="InterPro"/>
</dbReference>
<dbReference type="GO" id="GO:0010875">
    <property type="term" value="P:positive regulation of cholesterol efflux"/>
    <property type="evidence" value="ECO:0007669"/>
    <property type="project" value="Ensembl"/>
</dbReference>
<dbReference type="CDD" id="cd10283">
    <property type="entry name" value="MnuA_DNase1-like"/>
    <property type="match status" value="1"/>
</dbReference>
<dbReference type="Gene3D" id="1.10.150.280">
    <property type="entry name" value="AF1531-like domain"/>
    <property type="match status" value="1"/>
</dbReference>
<dbReference type="Gene3D" id="3.60.10.10">
    <property type="entry name" value="Endonuclease/exonuclease/phosphatase"/>
    <property type="match status" value="1"/>
</dbReference>
<dbReference type="Gene3D" id="1.10.150.320">
    <property type="entry name" value="Photosystem II 12 kDa extrinsic protein"/>
    <property type="match status" value="1"/>
</dbReference>
<dbReference type="InterPro" id="IPR004509">
    <property type="entry name" value="Competence_ComEA_HhH"/>
</dbReference>
<dbReference type="InterPro" id="IPR051675">
    <property type="entry name" value="Endo/Exo/Phosphatase_dom_1"/>
</dbReference>
<dbReference type="InterPro" id="IPR036691">
    <property type="entry name" value="Endo/exonu/phosph_ase_sf"/>
</dbReference>
<dbReference type="InterPro" id="IPR005135">
    <property type="entry name" value="Endo/exonuclease/phosphatase"/>
</dbReference>
<dbReference type="InterPro" id="IPR003583">
    <property type="entry name" value="Hlx-hairpin-Hlx_DNA-bd_motif"/>
</dbReference>
<dbReference type="InterPro" id="IPR010994">
    <property type="entry name" value="RuvA_2-like"/>
</dbReference>
<dbReference type="NCBIfam" id="TIGR00426">
    <property type="entry name" value="competence protein ComEA helix-hairpin-helix repeat region"/>
    <property type="match status" value="1"/>
</dbReference>
<dbReference type="PANTHER" id="PTHR21180">
    <property type="entry name" value="ENDONUCLEASE/EXONUCLEASE/PHOSPHATASE FAMILY DOMAIN-CONTAINING PROTEIN 1"/>
    <property type="match status" value="1"/>
</dbReference>
<dbReference type="PANTHER" id="PTHR21180:SF32">
    <property type="entry name" value="ENDONUCLEASE_EXONUCLEASE_PHOSPHATASE FAMILY DOMAIN-CONTAINING PROTEIN 1"/>
    <property type="match status" value="1"/>
</dbReference>
<dbReference type="Pfam" id="PF03372">
    <property type="entry name" value="Exo_endo_phos"/>
    <property type="match status" value="1"/>
</dbReference>
<dbReference type="Pfam" id="PF12836">
    <property type="entry name" value="HHH_3"/>
    <property type="match status" value="2"/>
</dbReference>
<dbReference type="SMART" id="SM00278">
    <property type="entry name" value="HhH1"/>
    <property type="match status" value="3"/>
</dbReference>
<dbReference type="SUPFAM" id="SSF56219">
    <property type="entry name" value="DNase I-like"/>
    <property type="match status" value="1"/>
</dbReference>
<dbReference type="SUPFAM" id="SSF47781">
    <property type="entry name" value="RuvA domain 2-like"/>
    <property type="match status" value="2"/>
</dbReference>
<accession>Q3MHJ7</accession>
<accession>Q6Q139</accession>
<sequence length="571" mass="62787">MGSTLGCHRSIPRDPSDLSHSRKFSAACNFSNILVNQERLNINTATEEELMTLPGVTRAVARSIVEYREYIGGFKKVEDLALVSGVGATKLEQVKFEICVSSKGSSAQHSPSSLRRDLMAEQQPHHLATAAAVPLTPRVNINTATPAQLMSVRGLTEKMAVSIVDYRREHGPFRSVEDLVRMGGINAAFLDRIRHQVFAERSRPPSTHTNGGLTFTAKPHPSPTSLSLQSEDLDLPPGGPTQIISTRPSVEAFGGTRDGRPVLRLATWNLQGCSVEKANNPGVREVVCMTLLENSIKLLAVQELLDREALEKFCVELNQPILPNIRKWKGPRGCWKAVVSETPSTQLQKGAGFAGFLWDTAAGVELRDAAWQESSPGNGHGKPVGPSPYLARFKVGSHDLTLVNLHLATLTLPGGENLSKNHSDSHRWASFTQTLQETLKGEKDVIVLGDFGQGPDSSDYDILRKEKFHHLIPAHTFTNISTKNPQGSKALDNIWISKSLKKVFTGHWAVVREGLTNPWIPDNWSWGGVASEHCPVLAEFYTEKDWTRKEGPRSGNGLTLERSEANIKHER</sequence>
<gene>
    <name type="primary">EEPD1</name>
</gene>
<name>EEPD1_BOVIN</name>
<feature type="initiator methionine" description="Removed" evidence="4">
    <location>
        <position position="1"/>
    </location>
</feature>
<feature type="chain" id="PRO_0000317260" description="Endonuclease/exonuclease/phosphatase family domain-containing protein 1">
    <location>
        <begin position="2"/>
        <end position="571"/>
    </location>
</feature>
<feature type="domain" description="HhH">
    <location>
        <begin position="38"/>
        <end position="67"/>
    </location>
</feature>
<feature type="region of interest" description="Disordered" evidence="5">
    <location>
        <begin position="1"/>
        <end position="20"/>
    </location>
</feature>
<feature type="region of interest" description="Disordered" evidence="5">
    <location>
        <begin position="202"/>
        <end position="227"/>
    </location>
</feature>
<feature type="region of interest" description="Disordered" evidence="5">
    <location>
        <begin position="548"/>
        <end position="571"/>
    </location>
</feature>
<feature type="compositionally biased region" description="Basic and acidic residues" evidence="5">
    <location>
        <begin position="11"/>
        <end position="20"/>
    </location>
</feature>
<feature type="compositionally biased region" description="Polar residues" evidence="5">
    <location>
        <begin position="204"/>
        <end position="213"/>
    </location>
</feature>
<feature type="compositionally biased region" description="Basic and acidic residues" evidence="5">
    <location>
        <begin position="561"/>
        <end position="571"/>
    </location>
</feature>
<feature type="modified residue" description="Phosphoserine" evidence="4">
    <location>
        <position position="16"/>
    </location>
</feature>
<feature type="modified residue" description="Phosphoserine" evidence="3">
    <location>
        <position position="21"/>
    </location>
</feature>
<feature type="modified residue" description="Phosphoserine" evidence="4">
    <location>
        <position position="25"/>
    </location>
</feature>
<feature type="modified residue" description="Phosphoserine" evidence="2">
    <location>
        <position position="106"/>
    </location>
</feature>
<feature type="modified residue" description="Phosphoserine" evidence="4">
    <location>
        <position position="110"/>
    </location>
</feature>
<feature type="modified residue" description="Phosphoserine" evidence="4">
    <location>
        <position position="162"/>
    </location>
</feature>
<feature type="modified residue" description="Phosphoserine" evidence="4">
    <location>
        <position position="175"/>
    </location>
</feature>
<feature type="modified residue" description="Phosphothreonine" evidence="2">
    <location>
        <position position="267"/>
    </location>
</feature>
<feature type="modified residue" description="Phosphoserine" evidence="4">
    <location>
        <position position="430"/>
    </location>
</feature>
<feature type="lipid moiety-binding region" description="N-myristoyl glycine" evidence="1">
    <location>
        <position position="2"/>
    </location>
</feature>
<feature type="sequence conflict" description="In Ref. 2; AAS77580." evidence="6" ref="2">
    <original>EEE</original>
    <variation>KEK</variation>
    <location>
        <begin position="47"/>
        <end position="49"/>
    </location>
</feature>
<feature type="sequence conflict" description="In Ref. 2; AAS77580." evidence="6" ref="2">
    <original>S</original>
    <variation>P</variation>
    <location>
        <position position="230"/>
    </location>
</feature>
<feature type="sequence conflict" description="In Ref. 2; AAS77580." evidence="6" ref="2">
    <original>V</original>
    <variation>M</variation>
    <location>
        <position position="287"/>
    </location>
</feature>
<feature type="sequence conflict" description="In Ref. 2; AAS77580." evidence="6" ref="2">
    <original>E</original>
    <variation>K</variation>
    <location>
        <position position="341"/>
    </location>
</feature>
<protein>
    <recommendedName>
        <fullName>Endonuclease/exonuclease/phosphatase family domain-containing protein 1</fullName>
    </recommendedName>
</protein>
<evidence type="ECO:0000250" key="1"/>
<evidence type="ECO:0000250" key="2">
    <source>
        <dbReference type="UniProtKB" id="Q3TGW2"/>
    </source>
</evidence>
<evidence type="ECO:0000250" key="3">
    <source>
        <dbReference type="UniProtKB" id="Q5XI74"/>
    </source>
</evidence>
<evidence type="ECO:0000250" key="4">
    <source>
        <dbReference type="UniProtKB" id="Q7L9B9"/>
    </source>
</evidence>
<evidence type="ECO:0000256" key="5">
    <source>
        <dbReference type="SAM" id="MobiDB-lite"/>
    </source>
</evidence>
<evidence type="ECO:0000305" key="6"/>
<organism>
    <name type="scientific">Bos taurus</name>
    <name type="common">Bovine</name>
    <dbReference type="NCBI Taxonomy" id="9913"/>
    <lineage>
        <taxon>Eukaryota</taxon>
        <taxon>Metazoa</taxon>
        <taxon>Chordata</taxon>
        <taxon>Craniata</taxon>
        <taxon>Vertebrata</taxon>
        <taxon>Euteleostomi</taxon>
        <taxon>Mammalia</taxon>
        <taxon>Eutheria</taxon>
        <taxon>Laurasiatheria</taxon>
        <taxon>Artiodactyla</taxon>
        <taxon>Ruminantia</taxon>
        <taxon>Pecora</taxon>
        <taxon>Bovidae</taxon>
        <taxon>Bovinae</taxon>
        <taxon>Bos</taxon>
    </lineage>
</organism>
<proteinExistence type="evidence at transcript level"/>
<reference key="1">
    <citation type="submission" date="2005-09" db="EMBL/GenBank/DDBJ databases">
        <authorList>
            <consortium name="NIH - Mammalian Gene Collection (MGC) project"/>
        </authorList>
    </citation>
    <scope>NUCLEOTIDE SEQUENCE [LARGE SCALE MRNA]</scope>
    <source>
        <strain>Hereford</strain>
        <tissue>Hypothalamus</tissue>
    </source>
</reference>
<reference key="2">
    <citation type="submission" date="2004-03" db="EMBL/GenBank/DDBJ databases">
        <authorList>
            <person name="Oberg E.A."/>
            <person name="Medrano J.F."/>
            <person name="DeNise S.K."/>
        </authorList>
    </citation>
    <scope>NUCLEOTIDE SEQUENCE [MRNA] OF 5-366</scope>
    <source>
        <strain>Brown Swiss</strain>
    </source>
</reference>